<sequence length="452" mass="50834">MMCGLEIHVQLNTNSKLFCSCPTNYQSAPNNTNICPVCLNQPGAKPYPPNQAALDNAIKVALMLGCEISNEVIYFMRKHYDYPDLSSGYQRTSVPVGIKGELNGVRIHEIHVEEDPGQYKPDRGTVDFNRSGIPLIEIVTEPDMKSPEEARNFLNELIRVLNYSGSARGEGTMRADVNISIEGGKRAEVKNVNSIRGAYKVLKFELIRQKNILRRGGEVQQETRAYLESQMITVPMRLKEDADDYRYIPDPDLPPLKIDPAHVEEIRQNMPEPAHLKTERFVEEYGIDKKDAKVLTSELELADAFEEVCKEVDANVAARLMRDELKRVLHYNKIQYAESKITPSDIVELINLIESKQVTPEAAHKLIEQMPGNDKTPTEIGNEMDIIGVVEDDAIVNAINQAIEENPNAVEDYKNGKDNAVNFLVGQVMRLTRGKANAGETNKMIKEKLDQL</sequence>
<protein>
    <recommendedName>
        <fullName evidence="1">Aspartyl/glutamyl-tRNA(Asn/Gln) amidotransferase subunit B</fullName>
        <shortName evidence="1">Asp/Glu-ADT subunit B</shortName>
        <ecNumber evidence="1">6.3.5.-</ecNumber>
    </recommendedName>
</protein>
<feature type="chain" id="PRO_0000241302" description="Aspartyl/glutamyl-tRNA(Asn/Gln) amidotransferase subunit B">
    <location>
        <begin position="1"/>
        <end position="452"/>
    </location>
</feature>
<organism>
    <name type="scientific">Methanosphaera stadtmanae (strain ATCC 43021 / DSM 3091 / JCM 11832 / MCB-3)</name>
    <dbReference type="NCBI Taxonomy" id="339860"/>
    <lineage>
        <taxon>Archaea</taxon>
        <taxon>Methanobacteriati</taxon>
        <taxon>Methanobacteriota</taxon>
        <taxon>Methanomada group</taxon>
        <taxon>Methanobacteria</taxon>
        <taxon>Methanobacteriales</taxon>
        <taxon>Methanobacteriaceae</taxon>
        <taxon>Methanosphaera</taxon>
    </lineage>
</organism>
<reference key="1">
    <citation type="journal article" date="2006" name="J. Bacteriol.">
        <title>The genome sequence of Methanosphaera stadtmanae reveals why this human intestinal archaeon is restricted to methanol and H2 for methane formation and ATP synthesis.</title>
        <authorList>
            <person name="Fricke W.F."/>
            <person name="Seedorf H."/>
            <person name="Henne A."/>
            <person name="Kruer M."/>
            <person name="Liesegang H."/>
            <person name="Hedderich R."/>
            <person name="Gottschalk G."/>
            <person name="Thauer R.K."/>
        </authorList>
    </citation>
    <scope>NUCLEOTIDE SEQUENCE [LARGE SCALE GENOMIC DNA]</scope>
    <source>
        <strain>ATCC 43021 / DSM 3091 / JCM 11832 / MCB-3</strain>
    </source>
</reference>
<dbReference type="EC" id="6.3.5.-" evidence="1"/>
<dbReference type="EMBL" id="CP000102">
    <property type="protein sequence ID" value="ABC56685.1"/>
    <property type="molecule type" value="Genomic_DNA"/>
</dbReference>
<dbReference type="RefSeq" id="WP_011405885.1">
    <property type="nucleotide sequence ID" value="NC_007681.1"/>
</dbReference>
<dbReference type="SMR" id="Q2NHE8"/>
<dbReference type="STRING" id="339860.Msp_0269"/>
<dbReference type="GeneID" id="41324842"/>
<dbReference type="KEGG" id="mst:Msp_0269"/>
<dbReference type="eggNOG" id="arCOG01718">
    <property type="taxonomic scope" value="Archaea"/>
</dbReference>
<dbReference type="HOGENOM" id="CLU_019240_0_1_2"/>
<dbReference type="OrthoDB" id="52755at2157"/>
<dbReference type="Proteomes" id="UP000001931">
    <property type="component" value="Chromosome"/>
</dbReference>
<dbReference type="GO" id="GO:0050566">
    <property type="term" value="F:asparaginyl-tRNA synthase (glutamine-hydrolyzing) activity"/>
    <property type="evidence" value="ECO:0007669"/>
    <property type="project" value="RHEA"/>
</dbReference>
<dbReference type="GO" id="GO:0005524">
    <property type="term" value="F:ATP binding"/>
    <property type="evidence" value="ECO:0007669"/>
    <property type="project" value="UniProtKB-KW"/>
</dbReference>
<dbReference type="GO" id="GO:0050567">
    <property type="term" value="F:glutaminyl-tRNA synthase (glutamine-hydrolyzing) activity"/>
    <property type="evidence" value="ECO:0007669"/>
    <property type="project" value="UniProtKB-UniRule"/>
</dbReference>
<dbReference type="GO" id="GO:0070681">
    <property type="term" value="P:glutaminyl-tRNAGln biosynthesis via transamidation"/>
    <property type="evidence" value="ECO:0007669"/>
    <property type="project" value="TreeGrafter"/>
</dbReference>
<dbReference type="GO" id="GO:0006412">
    <property type="term" value="P:translation"/>
    <property type="evidence" value="ECO:0007669"/>
    <property type="project" value="UniProtKB-UniRule"/>
</dbReference>
<dbReference type="FunFam" id="1.10.10.410:FF:000001">
    <property type="entry name" value="Aspartyl/glutamyl-tRNA(Asn/Gln) amidotransferase subunit B"/>
    <property type="match status" value="1"/>
</dbReference>
<dbReference type="Gene3D" id="1.10.10.410">
    <property type="match status" value="1"/>
</dbReference>
<dbReference type="Gene3D" id="1.10.150.380">
    <property type="entry name" value="GatB domain, N-terminal subdomain"/>
    <property type="match status" value="1"/>
</dbReference>
<dbReference type="HAMAP" id="MF_00121">
    <property type="entry name" value="GatB"/>
    <property type="match status" value="1"/>
</dbReference>
<dbReference type="InterPro" id="IPR017959">
    <property type="entry name" value="Asn/Gln-tRNA_amidoTrfase_suB/E"/>
</dbReference>
<dbReference type="InterPro" id="IPR006075">
    <property type="entry name" value="Asn/Gln-tRNA_Trfase_suB/E_cat"/>
</dbReference>
<dbReference type="InterPro" id="IPR018027">
    <property type="entry name" value="Asn/Gln_amidotransferase"/>
</dbReference>
<dbReference type="InterPro" id="IPR003789">
    <property type="entry name" value="Asn/Gln_tRNA_amidoTrase-B-like"/>
</dbReference>
<dbReference type="InterPro" id="IPR004413">
    <property type="entry name" value="GatB"/>
</dbReference>
<dbReference type="InterPro" id="IPR042114">
    <property type="entry name" value="GatB_C_1"/>
</dbReference>
<dbReference type="InterPro" id="IPR023168">
    <property type="entry name" value="GatB_Yqey_C_2"/>
</dbReference>
<dbReference type="InterPro" id="IPR017958">
    <property type="entry name" value="Gln-tRNA_amidoTrfase_suB_CS"/>
</dbReference>
<dbReference type="InterPro" id="IPR014746">
    <property type="entry name" value="Gln_synth/guanido_kin_cat_dom"/>
</dbReference>
<dbReference type="NCBIfam" id="TIGR00133">
    <property type="entry name" value="gatB"/>
    <property type="match status" value="1"/>
</dbReference>
<dbReference type="NCBIfam" id="NF004012">
    <property type="entry name" value="PRK05477.1-2"/>
    <property type="match status" value="1"/>
</dbReference>
<dbReference type="PANTHER" id="PTHR11659">
    <property type="entry name" value="GLUTAMYL-TRNA GLN AMIDOTRANSFERASE SUBUNIT B MITOCHONDRIAL AND PROKARYOTIC PET112-RELATED"/>
    <property type="match status" value="1"/>
</dbReference>
<dbReference type="PANTHER" id="PTHR11659:SF0">
    <property type="entry name" value="GLUTAMYL-TRNA(GLN) AMIDOTRANSFERASE SUBUNIT B, MITOCHONDRIAL"/>
    <property type="match status" value="1"/>
</dbReference>
<dbReference type="Pfam" id="PF02934">
    <property type="entry name" value="GatB_N"/>
    <property type="match status" value="1"/>
</dbReference>
<dbReference type="Pfam" id="PF02637">
    <property type="entry name" value="GatB_Yqey"/>
    <property type="match status" value="1"/>
</dbReference>
<dbReference type="SMART" id="SM00845">
    <property type="entry name" value="GatB_Yqey"/>
    <property type="match status" value="1"/>
</dbReference>
<dbReference type="SUPFAM" id="SSF89095">
    <property type="entry name" value="GatB/YqeY motif"/>
    <property type="match status" value="1"/>
</dbReference>
<dbReference type="SUPFAM" id="SSF55931">
    <property type="entry name" value="Glutamine synthetase/guanido kinase"/>
    <property type="match status" value="1"/>
</dbReference>
<dbReference type="PROSITE" id="PS01234">
    <property type="entry name" value="GATB"/>
    <property type="match status" value="1"/>
</dbReference>
<evidence type="ECO:0000255" key="1">
    <source>
        <dbReference type="HAMAP-Rule" id="MF_00121"/>
    </source>
</evidence>
<name>GATB_METST</name>
<keyword id="KW-0067">ATP-binding</keyword>
<keyword id="KW-0436">Ligase</keyword>
<keyword id="KW-0547">Nucleotide-binding</keyword>
<keyword id="KW-0648">Protein biosynthesis</keyword>
<keyword id="KW-1185">Reference proteome</keyword>
<accession>Q2NHE8</accession>
<gene>
    <name evidence="1" type="primary">gatB</name>
    <name type="ordered locus">Msp_0269</name>
</gene>
<comment type="function">
    <text evidence="1">Allows the formation of correctly charged Asn-tRNA(Asn) or Gln-tRNA(Gln) through the transamidation of misacylated Asp-tRNA(Asn) or Glu-tRNA(Gln) in organisms which lack either or both of asparaginyl-tRNA or glutaminyl-tRNA synthetases. The reaction takes place in the presence of glutamine and ATP through an activated phospho-Asp-tRNA(Asn) or phospho-Glu-tRNA(Gln).</text>
</comment>
<comment type="catalytic activity">
    <reaction evidence="1">
        <text>L-glutamyl-tRNA(Gln) + L-glutamine + ATP + H2O = L-glutaminyl-tRNA(Gln) + L-glutamate + ADP + phosphate + H(+)</text>
        <dbReference type="Rhea" id="RHEA:17521"/>
        <dbReference type="Rhea" id="RHEA-COMP:9681"/>
        <dbReference type="Rhea" id="RHEA-COMP:9684"/>
        <dbReference type="ChEBI" id="CHEBI:15377"/>
        <dbReference type="ChEBI" id="CHEBI:15378"/>
        <dbReference type="ChEBI" id="CHEBI:29985"/>
        <dbReference type="ChEBI" id="CHEBI:30616"/>
        <dbReference type="ChEBI" id="CHEBI:43474"/>
        <dbReference type="ChEBI" id="CHEBI:58359"/>
        <dbReference type="ChEBI" id="CHEBI:78520"/>
        <dbReference type="ChEBI" id="CHEBI:78521"/>
        <dbReference type="ChEBI" id="CHEBI:456216"/>
    </reaction>
</comment>
<comment type="catalytic activity">
    <reaction evidence="1">
        <text>L-aspartyl-tRNA(Asn) + L-glutamine + ATP + H2O = L-asparaginyl-tRNA(Asn) + L-glutamate + ADP + phosphate + 2 H(+)</text>
        <dbReference type="Rhea" id="RHEA:14513"/>
        <dbReference type="Rhea" id="RHEA-COMP:9674"/>
        <dbReference type="Rhea" id="RHEA-COMP:9677"/>
        <dbReference type="ChEBI" id="CHEBI:15377"/>
        <dbReference type="ChEBI" id="CHEBI:15378"/>
        <dbReference type="ChEBI" id="CHEBI:29985"/>
        <dbReference type="ChEBI" id="CHEBI:30616"/>
        <dbReference type="ChEBI" id="CHEBI:43474"/>
        <dbReference type="ChEBI" id="CHEBI:58359"/>
        <dbReference type="ChEBI" id="CHEBI:78515"/>
        <dbReference type="ChEBI" id="CHEBI:78516"/>
        <dbReference type="ChEBI" id="CHEBI:456216"/>
    </reaction>
</comment>
<comment type="subunit">
    <text evidence="1">Heterotrimer of A, B and C subunits.</text>
</comment>
<comment type="similarity">
    <text evidence="1">Belongs to the GatB/GatE family. GatB subfamily.</text>
</comment>
<proteinExistence type="inferred from homology"/>